<protein>
    <recommendedName>
        <fullName>NADPH-Fe(3+) oxidoreductase subunit alpha</fullName>
        <ecNumber>1.-.-.-</ecNumber>
    </recommendedName>
    <alternativeName>
        <fullName>Soluble Fe(3+) reductase alpha subunit</fullName>
    </alternativeName>
</protein>
<proteinExistence type="inferred from homology"/>
<comment type="function">
    <text evidence="7">The SfrAB enzymatic complex is probably involved in acetate metabolism and does not participate directly in the reduction of Fe(3+) chelates. May serve as a major route for NADP regeneration.</text>
</comment>
<comment type="cofactor">
    <cofactor evidence="6">
        <name>[4Fe-4S] cluster</name>
        <dbReference type="ChEBI" id="CHEBI:49883"/>
    </cofactor>
</comment>
<comment type="activity regulation">
    <text evidence="1">Not regulated by FAD or FMN.</text>
</comment>
<comment type="subunit">
    <text evidence="1">Heterotetramer with 2 beta subunits.</text>
</comment>
<comment type="subcellular location">
    <subcellularLocation>
        <location evidence="8">Cell inner membrane</location>
        <topology evidence="7">Peripheral membrane protein</topology>
    </subcellularLocation>
</comment>
<comment type="disruption phenotype">
    <text evidence="7">SfrAB-null strain is unable to grow in the presence of acetate and fumarate unless an additional electron donor is present. Strongly reduced NADPH-dependent benzyl viologen reductase activity.</text>
</comment>
<name>SFRA_GEOSK</name>
<gene>
    <name type="primary">sfrA</name>
    <name type="ordered locus">KN400_0498</name>
</gene>
<sequence>MVSLTIDGKDITVAKETTILDAAALLGITIPTLCWLKKVSPTGACRVCAVEIEGVDRPMTACNTPVKDGIKVTTQSEKLSRIRQKIMELMLVNHPLDCPVCDAGGECDLQNACYGLGAAKQEYGAVLERRKIRYDWPLIESDPNRCILCEKCVKVDHEIVGCNAIRVVNRGEATIIDTVDGNPLNCEFCGNCVAACPTGTLISKPFKFRGRPWAFTTTPSVCPFCATGCQIEYHSRNGRVERVTSDDSTYNSGNLCINGRFGYSYINSPDRLAEPMVKGQKADWNTAMGTAATALKQIVASHGADAVAGFGSPRVTNEDNYLFQKLMRSAIGTGNIDSEARLGFAATQKVLREMLGIAGASTTIDAIDRATAVLVVGCDLNAEATGMEYRVIKAATKNNAKLVLAAMRDIKLKKFANSHLKYRPGNETLLINALTKAVLEEGLENKEFCSANISNLSDLTAALAGVSIADAAAATGVTEADLRAAARLVGGKKGVAVIFGAELMRGGNTDAVKALINLALILGATAGDTGGLFPVYEKTNIRGLLDMGVAPDHFPGHQTDGTTFEKAWGKKLPAAAGKDLWQIIEGIEQGSVKALYLLGCDPVASFPEGERIRKALEKLELLIVQDPFPGEAAKMAHVVFPSSVAAEKNGTFTTIDGRVQPLAKAVAPSGDAREDWDILTELYNRLTGESRIHSPAAVLDEVAALVPAYASVGRTGGTITAQPRSGGLALAPVSARAVAGSPTTLLVGTILYHSGTTTTWSKNNLEIIPKGYIEIHPNDAAKLGIAEGGKVRLSAGSVKVEGTAKITPRVQPGLLFAPSHFRGMNVNALLSRDGGVVPVTVEKA</sequence>
<accession>D7AF63</accession>
<reference key="1">
    <citation type="journal article" date="2010" name="PLoS ONE">
        <title>De Novo assembly of the complete genome of an enhanced electricity-producing variant of Geobacter sulfurreducens using only short reads.</title>
        <authorList>
            <person name="Nagarajan H."/>
            <person name="Butler J.E."/>
            <person name="Klimes A."/>
            <person name="Qiu Y."/>
            <person name="Zengler K."/>
            <person name="Ward J."/>
            <person name="Young N.D."/>
            <person name="Methe B.A."/>
            <person name="Palsson B.O."/>
            <person name="Lovley D.R."/>
            <person name="Barrett C.L."/>
        </authorList>
    </citation>
    <scope>NUCLEOTIDE SEQUENCE [LARGE SCALE GENOMIC DNA]</scope>
    <source>
        <strain>DL-1 / KN400</strain>
    </source>
</reference>
<reference key="2">
    <citation type="journal article" date="2007" name="Microbiology">
        <title>Involvement of Geobacter sulfurreducens SfrAB in acetate metabolism rather than intracellular, respiration-linked Fe(III) citrate reduction.</title>
        <authorList>
            <person name="Coppi M.V."/>
            <person name="O'neil R.A."/>
            <person name="Leang C."/>
            <person name="Kaufmann F."/>
            <person name="Methe B.A."/>
            <person name="Nevin K.P."/>
            <person name="Woodard T.L."/>
            <person name="Liu A."/>
            <person name="Lovley D.R."/>
        </authorList>
    </citation>
    <scope>FUNCTION</scope>
    <scope>SUBCELLULAR LOCATION</scope>
    <scope>DISRUPTION PHENOTYPE</scope>
    <source>
        <strain>DL-1 / KN400</strain>
    </source>
</reference>
<feature type="chain" id="PRO_0000429034" description="NADPH-Fe(3+) oxidoreductase subunit alpha">
    <location>
        <begin position="1"/>
        <end position="844"/>
    </location>
</feature>
<feature type="domain" description="2Fe-2S ferredoxin-type" evidence="3">
    <location>
        <begin position="1"/>
        <end position="78"/>
    </location>
</feature>
<feature type="domain" description="4Fe-4S His(Cys)3-ligated-type" evidence="6">
    <location>
        <begin position="78"/>
        <end position="117"/>
    </location>
</feature>
<feature type="domain" description="4Fe-4S ferredoxin-type 1" evidence="4">
    <location>
        <begin position="137"/>
        <end position="168"/>
    </location>
</feature>
<feature type="domain" description="4Fe-4S ferredoxin-type 2" evidence="4">
    <location>
        <begin position="177"/>
        <end position="206"/>
    </location>
</feature>
<feature type="domain" description="4Fe-4S Mo/W bis-MGD-type" evidence="5">
    <location>
        <begin position="215"/>
        <end position="270"/>
    </location>
</feature>
<feature type="binding site" evidence="1">
    <location>
        <position position="34"/>
    </location>
    <ligand>
        <name>[2Fe-2S] cluster</name>
        <dbReference type="ChEBI" id="CHEBI:190135"/>
    </ligand>
</feature>
<feature type="binding site" evidence="1">
    <location>
        <position position="45"/>
    </location>
    <ligand>
        <name>[2Fe-2S] cluster</name>
        <dbReference type="ChEBI" id="CHEBI:190135"/>
    </ligand>
</feature>
<feature type="binding site" evidence="1">
    <location>
        <position position="48"/>
    </location>
    <ligand>
        <name>[2Fe-2S] cluster</name>
        <dbReference type="ChEBI" id="CHEBI:190135"/>
    </ligand>
</feature>
<feature type="binding site" evidence="1">
    <location>
        <position position="62"/>
    </location>
    <ligand>
        <name>[2Fe-2S] cluster</name>
        <dbReference type="ChEBI" id="CHEBI:190135"/>
    </ligand>
</feature>
<feature type="binding site" evidence="6">
    <location>
        <position position="94"/>
    </location>
    <ligand>
        <name>[4Fe-4S] cluster</name>
        <dbReference type="ChEBI" id="CHEBI:49883"/>
        <label>1</label>
    </ligand>
</feature>
<feature type="binding site" evidence="6">
    <location>
        <position position="98"/>
    </location>
    <ligand>
        <name>[4Fe-4S] cluster</name>
        <dbReference type="ChEBI" id="CHEBI:49883"/>
        <label>1</label>
    </ligand>
</feature>
<feature type="binding site" evidence="6">
    <location>
        <position position="101"/>
    </location>
    <ligand>
        <name>[4Fe-4S] cluster</name>
        <dbReference type="ChEBI" id="CHEBI:49883"/>
        <label>1</label>
    </ligand>
</feature>
<feature type="binding site" evidence="6">
    <location>
        <position position="107"/>
    </location>
    <ligand>
        <name>[4Fe-4S] cluster</name>
        <dbReference type="ChEBI" id="CHEBI:49883"/>
        <label>1</label>
    </ligand>
</feature>
<feature type="binding site" evidence="1">
    <location>
        <position position="146"/>
    </location>
    <ligand>
        <name>[4Fe-4S] cluster</name>
        <dbReference type="ChEBI" id="CHEBI:49883"/>
        <label>2</label>
    </ligand>
</feature>
<feature type="binding site" evidence="1">
    <location>
        <position position="149"/>
    </location>
    <ligand>
        <name>[4Fe-4S] cluster</name>
        <dbReference type="ChEBI" id="CHEBI:49883"/>
        <label>2</label>
    </ligand>
</feature>
<feature type="binding site" evidence="1">
    <location>
        <position position="152"/>
    </location>
    <ligand>
        <name>[4Fe-4S] cluster</name>
        <dbReference type="ChEBI" id="CHEBI:49883"/>
        <label>2</label>
    </ligand>
</feature>
<feature type="binding site" evidence="1">
    <location>
        <position position="186"/>
    </location>
    <ligand>
        <name>[4Fe-4S] cluster</name>
        <dbReference type="ChEBI" id="CHEBI:49883"/>
        <label>3</label>
    </ligand>
</feature>
<feature type="binding site" evidence="1">
    <location>
        <position position="189"/>
    </location>
    <ligand>
        <name>[4Fe-4S] cluster</name>
        <dbReference type="ChEBI" id="CHEBI:49883"/>
        <label>3</label>
    </ligand>
</feature>
<feature type="binding site" evidence="1">
    <location>
        <position position="192"/>
    </location>
    <ligand>
        <name>[4Fe-4S] cluster</name>
        <dbReference type="ChEBI" id="CHEBI:49883"/>
        <label>3</label>
    </ligand>
</feature>
<feature type="binding site" evidence="1">
    <location>
        <position position="196"/>
    </location>
    <ligand>
        <name>[4Fe-4S] cluster</name>
        <dbReference type="ChEBI" id="CHEBI:49883"/>
        <label>3</label>
    </ligand>
</feature>
<feature type="binding site" evidence="2">
    <location>
        <position position="222"/>
    </location>
    <ligand>
        <name>[4Fe-4S] cluster</name>
        <dbReference type="ChEBI" id="CHEBI:49883"/>
        <label>4</label>
    </ligand>
</feature>
<feature type="binding site" evidence="2">
    <location>
        <position position="225"/>
    </location>
    <ligand>
        <name>[4Fe-4S] cluster</name>
        <dbReference type="ChEBI" id="CHEBI:49883"/>
        <label>4</label>
    </ligand>
</feature>
<feature type="binding site" evidence="2">
    <location>
        <position position="229"/>
    </location>
    <ligand>
        <name>[4Fe-4S] cluster</name>
        <dbReference type="ChEBI" id="CHEBI:49883"/>
        <label>4</label>
    </ligand>
</feature>
<feature type="binding site" evidence="2">
    <location>
        <position position="256"/>
    </location>
    <ligand>
        <name>[4Fe-4S] cluster</name>
        <dbReference type="ChEBI" id="CHEBI:49883"/>
        <label>4</label>
    </ligand>
</feature>
<dbReference type="EC" id="1.-.-.-"/>
<dbReference type="EMBL" id="CP002031">
    <property type="protein sequence ID" value="ADI83361.1"/>
    <property type="molecule type" value="Genomic_DNA"/>
</dbReference>
<dbReference type="RefSeq" id="WP_010941177.1">
    <property type="nucleotide sequence ID" value="NC_017454.1"/>
</dbReference>
<dbReference type="SMR" id="D7AF63"/>
<dbReference type="KEGG" id="gsk:KN400_0498"/>
<dbReference type="PATRIC" id="fig|663917.3.peg.505"/>
<dbReference type="HOGENOM" id="CLU_000422_4_0_7"/>
<dbReference type="GO" id="GO:0005886">
    <property type="term" value="C:plasma membrane"/>
    <property type="evidence" value="ECO:0007669"/>
    <property type="project" value="UniProtKB-SubCell"/>
</dbReference>
<dbReference type="GO" id="GO:0051537">
    <property type="term" value="F:2 iron, 2 sulfur cluster binding"/>
    <property type="evidence" value="ECO:0007669"/>
    <property type="project" value="UniProtKB-KW"/>
</dbReference>
<dbReference type="GO" id="GO:0051539">
    <property type="term" value="F:4 iron, 4 sulfur cluster binding"/>
    <property type="evidence" value="ECO:0007669"/>
    <property type="project" value="UniProtKB-KW"/>
</dbReference>
<dbReference type="GO" id="GO:0046872">
    <property type="term" value="F:metal ion binding"/>
    <property type="evidence" value="ECO:0007669"/>
    <property type="project" value="UniProtKB-KW"/>
</dbReference>
<dbReference type="GO" id="GO:0043546">
    <property type="term" value="F:molybdopterin cofactor binding"/>
    <property type="evidence" value="ECO:0007669"/>
    <property type="project" value="InterPro"/>
</dbReference>
<dbReference type="GO" id="GO:0008137">
    <property type="term" value="F:NADH dehydrogenase (ubiquinone) activity"/>
    <property type="evidence" value="ECO:0007669"/>
    <property type="project" value="InterPro"/>
</dbReference>
<dbReference type="GO" id="GO:0042773">
    <property type="term" value="P:ATP synthesis coupled electron transport"/>
    <property type="evidence" value="ECO:0007669"/>
    <property type="project" value="InterPro"/>
</dbReference>
<dbReference type="CDD" id="cd00207">
    <property type="entry name" value="fer2"/>
    <property type="match status" value="1"/>
</dbReference>
<dbReference type="FunFam" id="3.30.70.20:FF:000035">
    <property type="entry name" value="Iron hydrogenase 1"/>
    <property type="match status" value="1"/>
</dbReference>
<dbReference type="FunFam" id="3.10.20.740:FF:000005">
    <property type="entry name" value="NADH:ubiquinone oxidoreductase subunit"/>
    <property type="match status" value="1"/>
</dbReference>
<dbReference type="Gene3D" id="2.40.40.20">
    <property type="match status" value="1"/>
</dbReference>
<dbReference type="Gene3D" id="3.10.20.740">
    <property type="match status" value="1"/>
</dbReference>
<dbReference type="Gene3D" id="3.30.70.20">
    <property type="match status" value="1"/>
</dbReference>
<dbReference type="Gene3D" id="3.40.50.740">
    <property type="match status" value="1"/>
</dbReference>
<dbReference type="Gene3D" id="2.20.25.90">
    <property type="entry name" value="ADC-like domains"/>
    <property type="match status" value="1"/>
</dbReference>
<dbReference type="Gene3D" id="3.40.228.10">
    <property type="entry name" value="Dimethylsulfoxide Reductase, domain 2"/>
    <property type="match status" value="1"/>
</dbReference>
<dbReference type="InterPro" id="IPR036010">
    <property type="entry name" value="2Fe-2S_ferredoxin-like_sf"/>
</dbReference>
<dbReference type="InterPro" id="IPR001041">
    <property type="entry name" value="2Fe-2S_ferredoxin-type"/>
</dbReference>
<dbReference type="InterPro" id="IPR017896">
    <property type="entry name" value="4Fe4S_Fe-S-bd"/>
</dbReference>
<dbReference type="InterPro" id="IPR017900">
    <property type="entry name" value="4Fe4S_Fe_S_CS"/>
</dbReference>
<dbReference type="InterPro" id="IPR009010">
    <property type="entry name" value="Asp_de-COase-like_dom_sf"/>
</dbReference>
<dbReference type="InterPro" id="IPR006657">
    <property type="entry name" value="MoPterin_dinucl-bd_dom"/>
</dbReference>
<dbReference type="InterPro" id="IPR006656">
    <property type="entry name" value="Mopterin_OxRdtase"/>
</dbReference>
<dbReference type="InterPro" id="IPR006963">
    <property type="entry name" value="Mopterin_OxRdtase_4Fe-4S_dom"/>
</dbReference>
<dbReference type="InterPro" id="IPR000283">
    <property type="entry name" value="NADH_UbQ_OxRdtase_75kDa_su_CS"/>
</dbReference>
<dbReference type="InterPro" id="IPR054351">
    <property type="entry name" value="NADH_UbQ_OxRdtase_ferredoxin"/>
</dbReference>
<dbReference type="InterPro" id="IPR019574">
    <property type="entry name" value="NADH_UbQ_OxRdtase_Gsu_4Fe4S-bd"/>
</dbReference>
<dbReference type="InterPro" id="IPR050123">
    <property type="entry name" value="Prok_molybdopt-oxidoreductase"/>
</dbReference>
<dbReference type="PANTHER" id="PTHR43105:SF9">
    <property type="entry name" value="NADPH-FE(3+) OXIDOREDUCTASE SUBUNIT ALPHA"/>
    <property type="match status" value="1"/>
</dbReference>
<dbReference type="PANTHER" id="PTHR43105">
    <property type="entry name" value="RESPIRATORY NITRATE REDUCTASE"/>
    <property type="match status" value="1"/>
</dbReference>
<dbReference type="Pfam" id="PF13510">
    <property type="entry name" value="Fer2_4"/>
    <property type="match status" value="1"/>
</dbReference>
<dbReference type="Pfam" id="PF22117">
    <property type="entry name" value="Fer4_Nqo3"/>
    <property type="match status" value="1"/>
</dbReference>
<dbReference type="Pfam" id="PF04879">
    <property type="entry name" value="Molybdop_Fe4S4"/>
    <property type="match status" value="1"/>
</dbReference>
<dbReference type="Pfam" id="PF00384">
    <property type="entry name" value="Molybdopterin"/>
    <property type="match status" value="1"/>
</dbReference>
<dbReference type="Pfam" id="PF01568">
    <property type="entry name" value="Molydop_binding"/>
    <property type="match status" value="1"/>
</dbReference>
<dbReference type="Pfam" id="PF10588">
    <property type="entry name" value="NADH-G_4Fe-4S_3"/>
    <property type="match status" value="1"/>
</dbReference>
<dbReference type="SMART" id="SM00926">
    <property type="entry name" value="Molybdop_Fe4S4"/>
    <property type="match status" value="1"/>
</dbReference>
<dbReference type="SMART" id="SM00929">
    <property type="entry name" value="NADH-G_4Fe-4S_3"/>
    <property type="match status" value="1"/>
</dbReference>
<dbReference type="SUPFAM" id="SSF54292">
    <property type="entry name" value="2Fe-2S ferredoxin-like"/>
    <property type="match status" value="1"/>
</dbReference>
<dbReference type="SUPFAM" id="SSF54862">
    <property type="entry name" value="4Fe-4S ferredoxins"/>
    <property type="match status" value="1"/>
</dbReference>
<dbReference type="SUPFAM" id="SSF50692">
    <property type="entry name" value="ADC-like"/>
    <property type="match status" value="1"/>
</dbReference>
<dbReference type="SUPFAM" id="SSF53706">
    <property type="entry name" value="Formate dehydrogenase/DMSO reductase, domains 1-3"/>
    <property type="match status" value="1"/>
</dbReference>
<dbReference type="PROSITE" id="PS51085">
    <property type="entry name" value="2FE2S_FER_2"/>
    <property type="match status" value="1"/>
</dbReference>
<dbReference type="PROSITE" id="PS00198">
    <property type="entry name" value="4FE4S_FER_1"/>
    <property type="match status" value="1"/>
</dbReference>
<dbReference type="PROSITE" id="PS51379">
    <property type="entry name" value="4FE4S_FER_2"/>
    <property type="match status" value="2"/>
</dbReference>
<dbReference type="PROSITE" id="PS51839">
    <property type="entry name" value="4FE4S_HC3"/>
    <property type="match status" value="1"/>
</dbReference>
<dbReference type="PROSITE" id="PS51669">
    <property type="entry name" value="4FE4S_MOW_BIS_MGD"/>
    <property type="match status" value="1"/>
</dbReference>
<dbReference type="PROSITE" id="PS00641">
    <property type="entry name" value="COMPLEX1_75K_1"/>
    <property type="match status" value="1"/>
</dbReference>
<dbReference type="PROSITE" id="PS00642">
    <property type="entry name" value="COMPLEX1_75K_2"/>
    <property type="match status" value="1"/>
</dbReference>
<evidence type="ECO:0000250" key="1"/>
<evidence type="ECO:0000255" key="2"/>
<evidence type="ECO:0000255" key="3">
    <source>
        <dbReference type="PROSITE-ProRule" id="PRU00465"/>
    </source>
</evidence>
<evidence type="ECO:0000255" key="4">
    <source>
        <dbReference type="PROSITE-ProRule" id="PRU00711"/>
    </source>
</evidence>
<evidence type="ECO:0000255" key="5">
    <source>
        <dbReference type="PROSITE-ProRule" id="PRU01004"/>
    </source>
</evidence>
<evidence type="ECO:0000255" key="6">
    <source>
        <dbReference type="PROSITE-ProRule" id="PRU01184"/>
    </source>
</evidence>
<evidence type="ECO:0000269" key="7">
    <source>
    </source>
</evidence>
<evidence type="ECO:0000305" key="8">
    <source>
    </source>
</evidence>
<keyword id="KW-0001">2Fe-2S</keyword>
<keyword id="KW-0004">4Fe-4S</keyword>
<keyword id="KW-0997">Cell inner membrane</keyword>
<keyword id="KW-1003">Cell membrane</keyword>
<keyword id="KW-0408">Iron</keyword>
<keyword id="KW-0411">Iron-sulfur</keyword>
<keyword id="KW-0472">Membrane</keyword>
<keyword id="KW-0479">Metal-binding</keyword>
<keyword id="KW-0560">Oxidoreductase</keyword>
<keyword id="KW-0677">Repeat</keyword>
<organism>
    <name type="scientific">Geobacter sulfurreducens (strain DL-1 / KN400)</name>
    <dbReference type="NCBI Taxonomy" id="663917"/>
    <lineage>
        <taxon>Bacteria</taxon>
        <taxon>Pseudomonadati</taxon>
        <taxon>Thermodesulfobacteriota</taxon>
        <taxon>Desulfuromonadia</taxon>
        <taxon>Geobacterales</taxon>
        <taxon>Geobacteraceae</taxon>
        <taxon>Geobacter</taxon>
    </lineage>
</organism>